<gene>
    <name type="primary">SLC12A1</name>
    <name type="synonym">NKCC2</name>
</gene>
<keyword id="KW-0025">Alternative splicing</keyword>
<keyword id="KW-1003">Cell membrane</keyword>
<keyword id="KW-0868">Chloride</keyword>
<keyword id="KW-0325">Glycoprotein</keyword>
<keyword id="KW-0406">Ion transport</keyword>
<keyword id="KW-0472">Membrane</keyword>
<keyword id="KW-0597">Phosphoprotein</keyword>
<keyword id="KW-0630">Potassium</keyword>
<keyword id="KW-0633">Potassium transport</keyword>
<keyword id="KW-1185">Reference proteome</keyword>
<keyword id="KW-0915">Sodium</keyword>
<keyword id="KW-0739">Sodium transport</keyword>
<keyword id="KW-0769">Symport</keyword>
<keyword id="KW-0812">Transmembrane</keyword>
<keyword id="KW-1133">Transmembrane helix</keyword>
<keyword id="KW-0813">Transport</keyword>
<protein>
    <recommendedName>
        <fullName>Solute carrier family 12 member 1</fullName>
    </recommendedName>
    <alternativeName>
        <fullName>Bumetanide-sensitive sodium-(potassium)-chloride cotransporter 1</fullName>
        <shortName>BSC1</shortName>
    </alternativeName>
    <alternativeName>
        <fullName>Kidney-specific Na-K-Cl symporter</fullName>
    </alternativeName>
    <alternativeName>
        <fullName>Na-K-2Cl cotransporter 2</fullName>
        <shortName>NKCC2</shortName>
    </alternativeName>
</protein>
<accession>P55015</accession>
<comment type="function">
    <text evidence="1 2">Renal sodium, potassium and chloride ion cotransporter that mediates the transepithelial NaCl reabsorption in the thick ascending limb and plays an essential role in the urinary concentration and volume regulation. Electrically silent transporter system.</text>
</comment>
<comment type="catalytic activity">
    <reaction evidence="1 2">
        <text>K(+)(out) + 2 chloride(out) + Na(+)(out) = K(+)(in) + 2 chloride(in) + Na(+)(in)</text>
        <dbReference type="Rhea" id="RHEA:72395"/>
        <dbReference type="ChEBI" id="CHEBI:17996"/>
        <dbReference type="ChEBI" id="CHEBI:29101"/>
        <dbReference type="ChEBI" id="CHEBI:29103"/>
    </reaction>
    <physiologicalReaction direction="left-to-right" evidence="1 2">
        <dbReference type="Rhea" id="RHEA:72396"/>
    </physiologicalReaction>
</comment>
<comment type="activity regulation">
    <text evidence="3">Activated following phosphorylation by OXSR1/OSR1 and STK39/SPAK downstream of WNK kinases (WNK1, WNK2, WNK3 or WNK4).</text>
</comment>
<comment type="subunit">
    <text evidence="2">When phosphorylated, interacts with PPP3CB.</text>
</comment>
<comment type="subcellular location">
    <subcellularLocation>
        <location evidence="1">Apical cell membrane</location>
        <topology evidence="4">Multi-pass membrane protein</topology>
    </subcellularLocation>
</comment>
<comment type="alternative products">
    <event type="alternative splicing"/>
    <isoform>
        <id>P55015-1</id>
        <name>A</name>
        <sequence type="displayed"/>
    </isoform>
    <isoform>
        <id>P55015-2</id>
        <name>B</name>
        <sequence type="described" ref="VSP_006103"/>
    </isoform>
    <isoform>
        <id>P55015-3</id>
        <name>F</name>
        <sequence type="described" ref="VSP_006104"/>
    </isoform>
</comment>
<comment type="tissue specificity">
    <text evidence="6">Predominant in kidney. The 3 isoforms are differentially distributed within the kidney: B almost exclusively in cortex, F almost exclusively in medulla, and A about equally distributed.</text>
</comment>
<comment type="domain">
    <text evidence="3">The RFXV motif mediates binding with OXSR1/OSR1 and STK39/SPAK.</text>
</comment>
<comment type="PTM">
    <text evidence="3">Phosphorylated at Ser-90, Thr-99 and Thr-104 by OXSR1/OSR1 and STK39/SPAK downstream of WNK kinases (WNK1, WNK2, WNK3 or WNK4), promoting its activity.</text>
</comment>
<comment type="similarity">
    <text evidence="8">Belongs to the SLC12A transporter family.</text>
</comment>
<feature type="chain" id="PRO_0000178020" description="Solute carrier family 12 member 1">
    <location>
        <begin position="1"/>
        <end position="1099"/>
    </location>
</feature>
<feature type="topological domain" description="Cytoplasmic" evidence="8">
    <location>
        <begin position="1"/>
        <end position="177"/>
    </location>
</feature>
<feature type="transmembrane region" description="Helical" evidence="4">
    <location>
        <begin position="178"/>
        <end position="198"/>
    </location>
</feature>
<feature type="topological domain" description="Extracellular" evidence="8">
    <location>
        <begin position="199"/>
        <end position="201"/>
    </location>
</feature>
<feature type="transmembrane region" description="Helical" evidence="4">
    <location>
        <begin position="202"/>
        <end position="222"/>
    </location>
</feature>
<feature type="topological domain" description="Cytoplasmic" evidence="8">
    <location>
        <begin position="223"/>
        <end position="259"/>
    </location>
</feature>
<feature type="transmembrane region" description="Helical" evidence="4">
    <location>
        <begin position="260"/>
        <end position="280"/>
    </location>
</feature>
<feature type="topological domain" description="Extracellular" evidence="8">
    <location>
        <begin position="281"/>
        <end position="302"/>
    </location>
</feature>
<feature type="transmembrane region" description="Helical" evidence="4">
    <location>
        <begin position="303"/>
        <end position="323"/>
    </location>
</feature>
<feature type="topological domain" description="Cytoplasmic" evidence="8">
    <location>
        <begin position="324"/>
        <end position="327"/>
    </location>
</feature>
<feature type="transmembrane region" description="Helical" evidence="4">
    <location>
        <begin position="328"/>
        <end position="348"/>
    </location>
</feature>
<feature type="topological domain" description="Extracellular" evidence="8">
    <location>
        <begin position="349"/>
        <end position="379"/>
    </location>
</feature>
<feature type="transmembrane region" description="Helical" evidence="4">
    <location>
        <begin position="380"/>
        <end position="400"/>
    </location>
</feature>
<feature type="topological domain" description="Cytoplasmic" evidence="8">
    <location>
        <begin position="401"/>
        <end position="417"/>
    </location>
</feature>
<feature type="transmembrane region" description="Helical" evidence="4">
    <location>
        <begin position="418"/>
        <end position="438"/>
    </location>
</feature>
<feature type="topological domain" description="Extracellular" evidence="8">
    <location>
        <begin position="439"/>
        <end position="550"/>
    </location>
</feature>
<feature type="transmembrane region" description="Helical" evidence="4">
    <location>
        <begin position="551"/>
        <end position="571"/>
    </location>
</feature>
<feature type="transmembrane region" description="Helical" evidence="4">
    <location>
        <begin position="572"/>
        <end position="592"/>
    </location>
</feature>
<feature type="topological domain" description="Extracellular" evidence="8">
    <location>
        <begin position="593"/>
        <end position="609"/>
    </location>
</feature>
<feature type="transmembrane region" description="Helical" evidence="4">
    <location>
        <begin position="610"/>
        <end position="630"/>
    </location>
</feature>
<feature type="topological domain" description="Cytoplasmic" evidence="8">
    <location>
        <begin position="631"/>
        <end position="1099"/>
    </location>
</feature>
<feature type="region of interest" description="Disordered" evidence="5">
    <location>
        <begin position="147"/>
        <end position="169"/>
    </location>
</feature>
<feature type="short sequence motif" description="RFXV motif" evidence="3">
    <location>
        <begin position="20"/>
        <end position="23"/>
    </location>
</feature>
<feature type="compositionally biased region" description="Basic and acidic residues" evidence="5">
    <location>
        <begin position="159"/>
        <end position="169"/>
    </location>
</feature>
<feature type="modified residue" description="Phosphoserine" evidence="1">
    <location>
        <position position="60"/>
    </location>
</feature>
<feature type="modified residue" description="Phosphoserine" evidence="3">
    <location>
        <position position="90"/>
    </location>
</feature>
<feature type="modified residue" description="Phosphothreonine" evidence="3">
    <location>
        <position position="94"/>
    </location>
</feature>
<feature type="modified residue" description="Phosphothreonine" evidence="1">
    <location>
        <position position="99"/>
    </location>
</feature>
<feature type="modified residue" description="Phosphothreonine" evidence="1">
    <location>
        <position position="104"/>
    </location>
</feature>
<feature type="modified residue" description="Phosphothreonine" evidence="2">
    <location>
        <position position="117"/>
    </location>
</feature>
<feature type="modified residue" description="Phosphoserine" evidence="2">
    <location>
        <position position="119"/>
    </location>
</feature>
<feature type="modified residue" description="Phosphoserine; by AMPK" evidence="2">
    <location>
        <position position="129"/>
    </location>
</feature>
<feature type="modified residue" description="Phosphoserine" evidence="2">
    <location>
        <position position="147"/>
    </location>
</feature>
<feature type="glycosylation site" description="N-linked (GlcNAc...) asparagine" evidence="4">
    <location>
        <position position="446"/>
    </location>
</feature>
<feature type="glycosylation site" description="N-linked (GlcNAc...) asparagine" evidence="4">
    <location>
        <position position="456"/>
    </location>
</feature>
<feature type="splice variant" id="VSP_006103" description="In isoform B." evidence="7">
    <original>VVIILLSTMVTSITGLSTSAIATNGF</original>
    <variation>VIIIGLAVTVTGITGLSTSAIATNGY</variation>
    <location>
        <begin position="213"/>
        <end position="238"/>
    </location>
</feature>
<feature type="splice variant" id="VSP_006104" description="In isoform F." evidence="7">
    <original>VVIILLSTMVTSITGLSTSAIATNGF</original>
    <variation>IIVIGLSVVVTTLTGISMSAICTNGV</variation>
    <location>
        <begin position="213"/>
        <end position="238"/>
    </location>
</feature>
<name>S12A1_RABIT</name>
<evidence type="ECO:0000250" key="1">
    <source>
        <dbReference type="UniProtKB" id="P55014"/>
    </source>
</evidence>
<evidence type="ECO:0000250" key="2">
    <source>
        <dbReference type="UniProtKB" id="P55016"/>
    </source>
</evidence>
<evidence type="ECO:0000250" key="3">
    <source>
        <dbReference type="UniProtKB" id="Q13621"/>
    </source>
</evidence>
<evidence type="ECO:0000255" key="4"/>
<evidence type="ECO:0000256" key="5">
    <source>
        <dbReference type="SAM" id="MobiDB-lite"/>
    </source>
</evidence>
<evidence type="ECO:0000269" key="6">
    <source>
    </source>
</evidence>
<evidence type="ECO:0000303" key="7">
    <source>
    </source>
</evidence>
<evidence type="ECO:0000305" key="8"/>
<dbReference type="EMBL" id="U07547">
    <property type="protein sequence ID" value="AAC48591.1"/>
    <property type="molecule type" value="mRNA"/>
</dbReference>
<dbReference type="EMBL" id="U07548">
    <property type="protein sequence ID" value="AAB03494.1"/>
    <property type="molecule type" value="mRNA"/>
</dbReference>
<dbReference type="EMBL" id="U07549">
    <property type="protein sequence ID" value="AAC48592.1"/>
    <property type="molecule type" value="mRNA"/>
</dbReference>
<dbReference type="PIR" id="I46496">
    <property type="entry name" value="I46496"/>
</dbReference>
<dbReference type="PIR" id="I46497">
    <property type="entry name" value="I46497"/>
</dbReference>
<dbReference type="PIR" id="I46498">
    <property type="entry name" value="I46498"/>
</dbReference>
<dbReference type="RefSeq" id="NP_001164442.1">
    <molecule id="P55015-1"/>
    <property type="nucleotide sequence ID" value="NM_001170971.1"/>
</dbReference>
<dbReference type="SMR" id="P55015"/>
<dbReference type="FunCoup" id="P55015">
    <property type="interactions" value="13"/>
</dbReference>
<dbReference type="STRING" id="9986.ENSOCUP00000014189"/>
<dbReference type="GlyCosmos" id="P55015">
    <property type="glycosylation" value="2 sites, No reported glycans"/>
</dbReference>
<dbReference type="iPTMnet" id="P55015"/>
<dbReference type="PaxDb" id="9986-ENSOCUP00000014189"/>
<dbReference type="GeneID" id="100328575"/>
<dbReference type="KEGG" id="ocu:100328575"/>
<dbReference type="CTD" id="6557"/>
<dbReference type="eggNOG" id="KOG2083">
    <property type="taxonomic scope" value="Eukaryota"/>
</dbReference>
<dbReference type="InParanoid" id="P55015"/>
<dbReference type="OrthoDB" id="2020542at2759"/>
<dbReference type="Proteomes" id="UP000001811">
    <property type="component" value="Unplaced"/>
</dbReference>
<dbReference type="GO" id="GO:0016324">
    <property type="term" value="C:apical plasma membrane"/>
    <property type="evidence" value="ECO:0000250"/>
    <property type="project" value="UniProtKB"/>
</dbReference>
<dbReference type="GO" id="GO:0008511">
    <property type="term" value="F:sodium:potassium:chloride symporter activity"/>
    <property type="evidence" value="ECO:0000250"/>
    <property type="project" value="UniProtKB"/>
</dbReference>
<dbReference type="GO" id="GO:0006884">
    <property type="term" value="P:cell volume homeostasis"/>
    <property type="evidence" value="ECO:0007669"/>
    <property type="project" value="TreeGrafter"/>
</dbReference>
<dbReference type="GO" id="GO:0055064">
    <property type="term" value="P:chloride ion homeostasis"/>
    <property type="evidence" value="ECO:0007669"/>
    <property type="project" value="TreeGrafter"/>
</dbReference>
<dbReference type="GO" id="GO:0055075">
    <property type="term" value="P:potassium ion homeostasis"/>
    <property type="evidence" value="ECO:0007669"/>
    <property type="project" value="TreeGrafter"/>
</dbReference>
<dbReference type="GO" id="GO:1990573">
    <property type="term" value="P:potassium ion import across plasma membrane"/>
    <property type="evidence" value="ECO:0007669"/>
    <property type="project" value="TreeGrafter"/>
</dbReference>
<dbReference type="GO" id="GO:0055078">
    <property type="term" value="P:sodium ion homeostasis"/>
    <property type="evidence" value="ECO:0007669"/>
    <property type="project" value="TreeGrafter"/>
</dbReference>
<dbReference type="FunFam" id="1.20.1740.10:FF:000005">
    <property type="entry name" value="Solute carrier family 12 member 1"/>
    <property type="match status" value="1"/>
</dbReference>
<dbReference type="Gene3D" id="1.20.1740.10">
    <property type="entry name" value="Amino acid/polyamine transporter I"/>
    <property type="match status" value="1"/>
</dbReference>
<dbReference type="InterPro" id="IPR004841">
    <property type="entry name" value="AA-permease/SLC12A_dom"/>
</dbReference>
<dbReference type="InterPro" id="IPR013612">
    <property type="entry name" value="AA_permease_N"/>
</dbReference>
<dbReference type="InterPro" id="IPR018491">
    <property type="entry name" value="SLC12_C"/>
</dbReference>
<dbReference type="InterPro" id="IPR002445">
    <property type="entry name" value="Slc12a1"/>
</dbReference>
<dbReference type="InterPro" id="IPR002443">
    <property type="entry name" value="SLC12A1/SLC12A2"/>
</dbReference>
<dbReference type="InterPro" id="IPR004842">
    <property type="entry name" value="SLC12A_fam"/>
</dbReference>
<dbReference type="NCBIfam" id="TIGR00930">
    <property type="entry name" value="2a30"/>
    <property type="match status" value="1"/>
</dbReference>
<dbReference type="PANTHER" id="PTHR11827:SF93">
    <property type="entry name" value="SOLUTE CARRIER FAMILY 12 MEMBER 1"/>
    <property type="match status" value="1"/>
</dbReference>
<dbReference type="PANTHER" id="PTHR11827">
    <property type="entry name" value="SOLUTE CARRIER FAMILY 12, CATION COTRANSPORTERS"/>
    <property type="match status" value="1"/>
</dbReference>
<dbReference type="Pfam" id="PF00324">
    <property type="entry name" value="AA_permease"/>
    <property type="match status" value="1"/>
</dbReference>
<dbReference type="Pfam" id="PF08403">
    <property type="entry name" value="AA_permease_N"/>
    <property type="match status" value="1"/>
</dbReference>
<dbReference type="Pfam" id="PF03522">
    <property type="entry name" value="SLC12"/>
    <property type="match status" value="1"/>
</dbReference>
<dbReference type="PRINTS" id="PR01207">
    <property type="entry name" value="NAKCLTRNSPRT"/>
</dbReference>
<dbReference type="PRINTS" id="PR01209">
    <property type="entry name" value="NAKCLTRSPRT2"/>
</dbReference>
<sequence length="1099" mass="121471">MSLNNSSSVFLDSVPTNTNRFQVNVINENHESCAAGIDNTDPPHYEETSFGDEQNRLRISFRPGNQECYDNFLQTGETTKTDASFHTYDSHTNTYYLQTFGHNTMDAVPKIEYYRNTGSVSGPKVNRPSLLEIHEQLAKNVAVTPGSADRVANGEGMPGEEHAENKEEDNKAGAVKFGWVKGVLVRCMLNIWGVMLFIRLSWIVGEAGIGLGVVIILLSTMVTSITGLSTSAIATNGFVRGGGAYYLISRSLGPEFGGSIGLIFAFANAVAVAMYVVGFAETVVDLLKESDSMMVDPTNDIRIIGSITVVILLGISVAGMEWEAKAQVILLIILLIAIANFFIGTVIPSNNEKKSRGFFNYQASIFAENFGPSFTKGEGFFSVFAIFFPAATGILAGANISGDLEDPQDAIPRGTMLAIFITTVAYIGVAICVGACVVRDATGSMNDTIISGINCNGSAACGLGYDFSRCRHEPCQYGLMNNFQVMSMVSGFGPLITAGIFSATLSSALASLVSAAKVFQALCKDNIYKALQFFAKGYGKNNEPLRGYILTFVIAMAFILIAELNTIAPIISNFFLASYALINFSCFHASYAKSPGWRPAYGIYNMWVSLFGAVLCCAVMFVINWWAAVITYVIEFFLYIYVTYKKPDVNWGSSTQALSYVSALDNALELTTVEDHVKNFRPQCFVLTGGPMTRPALLDITYAFTKNSGLCICCEVFVGPRKLCVKEMNSGMAKKQAWLIKNKIKAFYAAVAADCFRDGVRSLLQASGLGRMKPNTLVIGYKKKWRKAPLTEIENYVGIIHDAFDFEIGVVIVRISQGFDISQVLQVQEELEKLEQERLALEATIKDNECEEGNGGIRGLFKKVGKLNITKPTPKKDSSINTIQSMHVGEFNQKLVEASTQFKKKQGKGTIDVWWLFDDGGLTLLIPYILTLRKKWKDCKLRIYVGGKINRIEEEKIAMASLLSKFRIKFADIHVIGDINIKPNKESWKFFEEMIEPYRLHESCKDLTTAEKLKRETPWKITDAELEAVKEKSYRQVRLNELLQEHSRAANLIVLSLPVARKGSISDLLYMAWLEILTKNLPPVLLVRGNHKNVLTFYS</sequence>
<reference key="1">
    <citation type="journal article" date="1994" name="Proc. Natl. Acad. Sci. U.S.A.">
        <title>Alternatively spliced isoforms of the putative renal Na-K-Cl cotransporter are differentially distributed within the rabbit kidney.</title>
        <authorList>
            <person name="Payne J.A."/>
            <person name="Forbush B. III"/>
        </authorList>
    </citation>
    <scope>NUCLEOTIDE SEQUENCE [MRNA] (ISOFORMS A; B AND F)</scope>
    <scope>TISSUE SPECIFICITY</scope>
    <source>
        <strain>New Zealand white</strain>
        <tissue>Kidney</tissue>
    </source>
</reference>
<organism>
    <name type="scientific">Oryctolagus cuniculus</name>
    <name type="common">Rabbit</name>
    <dbReference type="NCBI Taxonomy" id="9986"/>
    <lineage>
        <taxon>Eukaryota</taxon>
        <taxon>Metazoa</taxon>
        <taxon>Chordata</taxon>
        <taxon>Craniata</taxon>
        <taxon>Vertebrata</taxon>
        <taxon>Euteleostomi</taxon>
        <taxon>Mammalia</taxon>
        <taxon>Eutheria</taxon>
        <taxon>Euarchontoglires</taxon>
        <taxon>Glires</taxon>
        <taxon>Lagomorpha</taxon>
        <taxon>Leporidae</taxon>
        <taxon>Oryctolagus</taxon>
    </lineage>
</organism>
<proteinExistence type="evidence at transcript level"/>